<dbReference type="EC" id="2.1.3.15" evidence="1"/>
<dbReference type="EMBL" id="CP001600">
    <property type="protein sequence ID" value="ACR68070.1"/>
    <property type="molecule type" value="Genomic_DNA"/>
</dbReference>
<dbReference type="RefSeq" id="WP_015870261.1">
    <property type="nucleotide sequence ID" value="NZ_CP169062.1"/>
</dbReference>
<dbReference type="SMR" id="C5B7S4"/>
<dbReference type="STRING" id="67780.B6E78_14855"/>
<dbReference type="GeneID" id="69537908"/>
<dbReference type="KEGG" id="eic:NT01EI_0855"/>
<dbReference type="PATRIC" id="fig|634503.3.peg.773"/>
<dbReference type="HOGENOM" id="CLU_015486_0_2_6"/>
<dbReference type="OrthoDB" id="9808023at2"/>
<dbReference type="UniPathway" id="UPA00655">
    <property type="reaction ID" value="UER00711"/>
</dbReference>
<dbReference type="Proteomes" id="UP000001485">
    <property type="component" value="Chromosome"/>
</dbReference>
<dbReference type="GO" id="GO:0009317">
    <property type="term" value="C:acetyl-CoA carboxylase complex"/>
    <property type="evidence" value="ECO:0007669"/>
    <property type="project" value="InterPro"/>
</dbReference>
<dbReference type="GO" id="GO:0003989">
    <property type="term" value="F:acetyl-CoA carboxylase activity"/>
    <property type="evidence" value="ECO:0007669"/>
    <property type="project" value="InterPro"/>
</dbReference>
<dbReference type="GO" id="GO:0005524">
    <property type="term" value="F:ATP binding"/>
    <property type="evidence" value="ECO:0007669"/>
    <property type="project" value="UniProtKB-KW"/>
</dbReference>
<dbReference type="GO" id="GO:0016743">
    <property type="term" value="F:carboxyl- or carbamoyltransferase activity"/>
    <property type="evidence" value="ECO:0007669"/>
    <property type="project" value="UniProtKB-UniRule"/>
</dbReference>
<dbReference type="GO" id="GO:0006633">
    <property type="term" value="P:fatty acid biosynthetic process"/>
    <property type="evidence" value="ECO:0007669"/>
    <property type="project" value="UniProtKB-KW"/>
</dbReference>
<dbReference type="GO" id="GO:2001295">
    <property type="term" value="P:malonyl-CoA biosynthetic process"/>
    <property type="evidence" value="ECO:0007669"/>
    <property type="project" value="UniProtKB-UniRule"/>
</dbReference>
<dbReference type="FunFam" id="3.90.226.10:FF:000008">
    <property type="entry name" value="Acetyl-coenzyme A carboxylase carboxyl transferase subunit alpha"/>
    <property type="match status" value="1"/>
</dbReference>
<dbReference type="Gene3D" id="3.90.226.10">
    <property type="entry name" value="2-enoyl-CoA Hydratase, Chain A, domain 1"/>
    <property type="match status" value="1"/>
</dbReference>
<dbReference type="HAMAP" id="MF_00823">
    <property type="entry name" value="AcetylCoA_CT_alpha"/>
    <property type="match status" value="1"/>
</dbReference>
<dbReference type="InterPro" id="IPR001095">
    <property type="entry name" value="Acetyl_CoA_COase_a_su"/>
</dbReference>
<dbReference type="InterPro" id="IPR029045">
    <property type="entry name" value="ClpP/crotonase-like_dom_sf"/>
</dbReference>
<dbReference type="InterPro" id="IPR011763">
    <property type="entry name" value="COA_CT_C"/>
</dbReference>
<dbReference type="NCBIfam" id="TIGR00513">
    <property type="entry name" value="accA"/>
    <property type="match status" value="1"/>
</dbReference>
<dbReference type="NCBIfam" id="NF041504">
    <property type="entry name" value="AccA_sub"/>
    <property type="match status" value="1"/>
</dbReference>
<dbReference type="NCBIfam" id="NF004344">
    <property type="entry name" value="PRK05724.1"/>
    <property type="match status" value="1"/>
</dbReference>
<dbReference type="PANTHER" id="PTHR42853">
    <property type="entry name" value="ACETYL-COENZYME A CARBOXYLASE CARBOXYL TRANSFERASE SUBUNIT ALPHA"/>
    <property type="match status" value="1"/>
</dbReference>
<dbReference type="PANTHER" id="PTHR42853:SF3">
    <property type="entry name" value="ACETYL-COENZYME A CARBOXYLASE CARBOXYL TRANSFERASE SUBUNIT ALPHA, CHLOROPLASTIC"/>
    <property type="match status" value="1"/>
</dbReference>
<dbReference type="Pfam" id="PF03255">
    <property type="entry name" value="ACCA"/>
    <property type="match status" value="1"/>
</dbReference>
<dbReference type="PRINTS" id="PR01069">
    <property type="entry name" value="ACCCTRFRASEA"/>
</dbReference>
<dbReference type="SUPFAM" id="SSF52096">
    <property type="entry name" value="ClpP/crotonase"/>
    <property type="match status" value="1"/>
</dbReference>
<dbReference type="PROSITE" id="PS50989">
    <property type="entry name" value="COA_CT_CTER"/>
    <property type="match status" value="1"/>
</dbReference>
<feature type="chain" id="PRO_1000213125" description="Acetyl-coenzyme A carboxylase carboxyl transferase subunit alpha">
    <location>
        <begin position="1"/>
        <end position="319"/>
    </location>
</feature>
<feature type="domain" description="CoA carboxyltransferase C-terminal" evidence="2">
    <location>
        <begin position="35"/>
        <end position="296"/>
    </location>
</feature>
<keyword id="KW-0067">ATP-binding</keyword>
<keyword id="KW-0963">Cytoplasm</keyword>
<keyword id="KW-0275">Fatty acid biosynthesis</keyword>
<keyword id="KW-0276">Fatty acid metabolism</keyword>
<keyword id="KW-0444">Lipid biosynthesis</keyword>
<keyword id="KW-0443">Lipid metabolism</keyword>
<keyword id="KW-0547">Nucleotide-binding</keyword>
<keyword id="KW-0808">Transferase</keyword>
<name>ACCA_EDWI9</name>
<protein>
    <recommendedName>
        <fullName evidence="1">Acetyl-coenzyme A carboxylase carboxyl transferase subunit alpha</fullName>
        <shortName evidence="1">ACCase subunit alpha</shortName>
        <shortName evidence="1">Acetyl-CoA carboxylase carboxyltransferase subunit alpha</shortName>
        <ecNumber evidence="1">2.1.3.15</ecNumber>
    </recommendedName>
</protein>
<sequence length="319" mass="35417">MSLNFLDFEQPIAELEAKIDSLNALSRQDEKLDINIDEEVQRLREKSVELTRKIFADLGAWQIAQLARHPRRPYTLDYIQHIFTDFDELAGDRAYADDKAIVGGMARLDGRPVMVIGHQKGRETKEKIRRNFGMPAPEGYRKALRLMEMAERFNLPIVTFIDTPGAYPGVGAEERGQSEAIARNLREMSGLKVPVICTVIGEGGSGGALAIGVGDKVNMLQYSTYSVISPEGCASILWKSADKAPLAAEAMGITAPRLQELKLIDSVIPEPLGGAHRDPQAVAASLKTQLLADLEDLDTLEKEELLDRRYQRLMNYGYC</sequence>
<proteinExistence type="inferred from homology"/>
<gene>
    <name evidence="1" type="primary">accA</name>
    <name type="ordered locus">NT01EI_0855</name>
</gene>
<evidence type="ECO:0000255" key="1">
    <source>
        <dbReference type="HAMAP-Rule" id="MF_00823"/>
    </source>
</evidence>
<evidence type="ECO:0000255" key="2">
    <source>
        <dbReference type="PROSITE-ProRule" id="PRU01137"/>
    </source>
</evidence>
<reference key="1">
    <citation type="submission" date="2009-03" db="EMBL/GenBank/DDBJ databases">
        <title>Complete genome sequence of Edwardsiella ictaluri 93-146.</title>
        <authorList>
            <person name="Williams M.L."/>
            <person name="Gillaspy A.F."/>
            <person name="Dyer D.W."/>
            <person name="Thune R.L."/>
            <person name="Waldbieser G.C."/>
            <person name="Schuster S.C."/>
            <person name="Gipson J."/>
            <person name="Zaitshik J."/>
            <person name="Landry C."/>
            <person name="Lawrence M.L."/>
        </authorList>
    </citation>
    <scope>NUCLEOTIDE SEQUENCE [LARGE SCALE GENOMIC DNA]</scope>
    <source>
        <strain>93-146</strain>
    </source>
</reference>
<organism>
    <name type="scientific">Edwardsiella ictaluri (strain 93-146)</name>
    <dbReference type="NCBI Taxonomy" id="634503"/>
    <lineage>
        <taxon>Bacteria</taxon>
        <taxon>Pseudomonadati</taxon>
        <taxon>Pseudomonadota</taxon>
        <taxon>Gammaproteobacteria</taxon>
        <taxon>Enterobacterales</taxon>
        <taxon>Hafniaceae</taxon>
        <taxon>Edwardsiella</taxon>
    </lineage>
</organism>
<comment type="function">
    <text evidence="1">Component of the acetyl coenzyme A carboxylase (ACC) complex. First, biotin carboxylase catalyzes the carboxylation of biotin on its carrier protein (BCCP) and then the CO(2) group is transferred by the carboxyltransferase to acetyl-CoA to form malonyl-CoA.</text>
</comment>
<comment type="catalytic activity">
    <reaction evidence="1">
        <text>N(6)-carboxybiotinyl-L-lysyl-[protein] + acetyl-CoA = N(6)-biotinyl-L-lysyl-[protein] + malonyl-CoA</text>
        <dbReference type="Rhea" id="RHEA:54728"/>
        <dbReference type="Rhea" id="RHEA-COMP:10505"/>
        <dbReference type="Rhea" id="RHEA-COMP:10506"/>
        <dbReference type="ChEBI" id="CHEBI:57288"/>
        <dbReference type="ChEBI" id="CHEBI:57384"/>
        <dbReference type="ChEBI" id="CHEBI:83144"/>
        <dbReference type="ChEBI" id="CHEBI:83145"/>
        <dbReference type="EC" id="2.1.3.15"/>
    </reaction>
</comment>
<comment type="pathway">
    <text evidence="1">Lipid metabolism; malonyl-CoA biosynthesis; malonyl-CoA from acetyl-CoA: step 1/1.</text>
</comment>
<comment type="subunit">
    <text evidence="1">Acetyl-CoA carboxylase is a heterohexamer composed of biotin carboxyl carrier protein (AccB), biotin carboxylase (AccC) and two subunits each of ACCase subunit alpha (AccA) and ACCase subunit beta (AccD).</text>
</comment>
<comment type="subcellular location">
    <subcellularLocation>
        <location evidence="1">Cytoplasm</location>
    </subcellularLocation>
</comment>
<comment type="similarity">
    <text evidence="1">Belongs to the AccA family.</text>
</comment>
<accession>C5B7S4</accession>